<proteinExistence type="inferred from homology"/>
<geneLocation type="mitochondrion"/>
<comment type="function">
    <text evidence="2">Component of the ubiquinol-cytochrome c reductase complex (complex III or cytochrome b-c1 complex) that is part of the mitochondrial respiratory chain. The b-c1 complex mediates electron transfer from ubiquinol to cytochrome c. Contributes to the generation of a proton gradient across the mitochondrial membrane that is then used for ATP synthesis.</text>
</comment>
<comment type="cofactor">
    <cofactor evidence="2">
        <name>heme b</name>
        <dbReference type="ChEBI" id="CHEBI:60344"/>
    </cofactor>
    <text evidence="2">Binds 2 heme b groups non-covalently.</text>
</comment>
<comment type="subunit">
    <text evidence="2">The cytochrome bc1 complex contains 11 subunits: 3 respiratory subunits (MT-CYB, CYC1 and UQCRFS1), 2 core proteins (UQCRC1 and UQCRC2) and 6 low-molecular weight proteins (UQCRH/QCR6, UQCRB/QCR7, UQCRQ/QCR8, UQCR10/QCR9, UQCR11/QCR10 and a cleavage product of UQCRFS1). This cytochrome bc1 complex then forms a dimer.</text>
</comment>
<comment type="subcellular location">
    <subcellularLocation>
        <location evidence="2">Mitochondrion inner membrane</location>
        <topology evidence="2">Multi-pass membrane protein</topology>
    </subcellularLocation>
</comment>
<comment type="miscellaneous">
    <text evidence="1">Heme 1 (or BL or b562) is low-potential and absorbs at about 562 nm, and heme 2 (or BH or b566) is high-potential and absorbs at about 566 nm.</text>
</comment>
<comment type="similarity">
    <text evidence="3 4">Belongs to the cytochrome b family.</text>
</comment>
<comment type="caution">
    <text evidence="2">The full-length protein contains only eight transmembrane helices, not nine as predicted by bioinformatics tools.</text>
</comment>
<feature type="chain" id="PRO_0000255090" description="Cytochrome b">
    <location>
        <begin position="1"/>
        <end position="380"/>
    </location>
</feature>
<feature type="transmembrane region" description="Helical" evidence="2">
    <location>
        <begin position="33"/>
        <end position="53"/>
    </location>
</feature>
<feature type="transmembrane region" description="Helical" evidence="2">
    <location>
        <begin position="77"/>
        <end position="98"/>
    </location>
</feature>
<feature type="transmembrane region" description="Helical" evidence="2">
    <location>
        <begin position="113"/>
        <end position="133"/>
    </location>
</feature>
<feature type="transmembrane region" description="Helical" evidence="2">
    <location>
        <begin position="178"/>
        <end position="198"/>
    </location>
</feature>
<feature type="transmembrane region" description="Helical" evidence="2">
    <location>
        <begin position="226"/>
        <end position="246"/>
    </location>
</feature>
<feature type="transmembrane region" description="Helical" evidence="2">
    <location>
        <begin position="288"/>
        <end position="308"/>
    </location>
</feature>
<feature type="transmembrane region" description="Helical" evidence="2">
    <location>
        <begin position="320"/>
        <end position="340"/>
    </location>
</feature>
<feature type="transmembrane region" description="Helical" evidence="2">
    <location>
        <begin position="347"/>
        <end position="367"/>
    </location>
</feature>
<feature type="binding site" description="axial binding residue" evidence="2">
    <location>
        <position position="83"/>
    </location>
    <ligand>
        <name>heme b</name>
        <dbReference type="ChEBI" id="CHEBI:60344"/>
        <label>b562</label>
    </ligand>
    <ligandPart>
        <name>Fe</name>
        <dbReference type="ChEBI" id="CHEBI:18248"/>
    </ligandPart>
</feature>
<feature type="binding site" description="axial binding residue" evidence="2">
    <location>
        <position position="97"/>
    </location>
    <ligand>
        <name>heme b</name>
        <dbReference type="ChEBI" id="CHEBI:60344"/>
        <label>b566</label>
    </ligand>
    <ligandPart>
        <name>Fe</name>
        <dbReference type="ChEBI" id="CHEBI:18248"/>
    </ligandPart>
</feature>
<feature type="binding site" description="axial binding residue" evidence="2">
    <location>
        <position position="182"/>
    </location>
    <ligand>
        <name>heme b</name>
        <dbReference type="ChEBI" id="CHEBI:60344"/>
        <label>b562</label>
    </ligand>
    <ligandPart>
        <name>Fe</name>
        <dbReference type="ChEBI" id="CHEBI:18248"/>
    </ligandPart>
</feature>
<feature type="binding site" description="axial binding residue" evidence="2">
    <location>
        <position position="196"/>
    </location>
    <ligand>
        <name>heme b</name>
        <dbReference type="ChEBI" id="CHEBI:60344"/>
        <label>b566</label>
    </ligand>
    <ligandPart>
        <name>Fe</name>
        <dbReference type="ChEBI" id="CHEBI:18248"/>
    </ligandPart>
</feature>
<feature type="binding site" evidence="2">
    <location>
        <position position="201"/>
    </location>
    <ligand>
        <name>a ubiquinone</name>
        <dbReference type="ChEBI" id="CHEBI:16389"/>
    </ligand>
</feature>
<keyword id="KW-0249">Electron transport</keyword>
<keyword id="KW-0349">Heme</keyword>
<keyword id="KW-0408">Iron</keyword>
<keyword id="KW-0472">Membrane</keyword>
<keyword id="KW-0479">Metal-binding</keyword>
<keyword id="KW-0496">Mitochondrion</keyword>
<keyword id="KW-0999">Mitochondrion inner membrane</keyword>
<keyword id="KW-0679">Respiratory chain</keyword>
<keyword id="KW-0812">Transmembrane</keyword>
<keyword id="KW-1133">Transmembrane helix</keyword>
<keyword id="KW-0813">Transport</keyword>
<keyword id="KW-0830">Ubiquinone</keyword>
<gene>
    <name type="primary">MT-CYB</name>
    <name type="synonym">COB</name>
    <name type="synonym">CYTB</name>
    <name type="synonym">MTCYB</name>
</gene>
<reference key="1">
    <citation type="journal article" date="2000" name="J. Mammal.">
        <title>Molecular systematics of a holarctic rodent (Microtus, Muridae).</title>
        <authorList>
            <person name="Conroy C.J."/>
            <person name="Cook J.A."/>
        </authorList>
    </citation>
    <scope>NUCLEOTIDE SEQUENCE [GENOMIC DNA]</scope>
</reference>
<organism>
    <name type="scientific">Microtus oregoni</name>
    <name type="common">Creeping vole</name>
    <dbReference type="NCBI Taxonomy" id="111838"/>
    <lineage>
        <taxon>Eukaryota</taxon>
        <taxon>Metazoa</taxon>
        <taxon>Chordata</taxon>
        <taxon>Craniata</taxon>
        <taxon>Vertebrata</taxon>
        <taxon>Euteleostomi</taxon>
        <taxon>Mammalia</taxon>
        <taxon>Eutheria</taxon>
        <taxon>Euarchontoglires</taxon>
        <taxon>Glires</taxon>
        <taxon>Rodentia</taxon>
        <taxon>Myomorpha</taxon>
        <taxon>Muroidea</taxon>
        <taxon>Cricetidae</taxon>
        <taxon>Arvicolinae</taxon>
        <taxon>Microtus</taxon>
    </lineage>
</organism>
<name>CYB_MICOR</name>
<evidence type="ECO:0000250" key="1"/>
<evidence type="ECO:0000250" key="2">
    <source>
        <dbReference type="UniProtKB" id="P00157"/>
    </source>
</evidence>
<evidence type="ECO:0000255" key="3">
    <source>
        <dbReference type="PROSITE-ProRule" id="PRU00967"/>
    </source>
</evidence>
<evidence type="ECO:0000255" key="4">
    <source>
        <dbReference type="PROSITE-ProRule" id="PRU00968"/>
    </source>
</evidence>
<sequence length="380" mass="42940">MTIIRKKHPLIKIINHSFIDLPTPSNISSWWNFGSLLGLCLIIQILTGLFLAMHYTSDTTTAFSSVAHICRDVNYGWLIRYMHANGASMFFICLFLHVGRGVYYGSYNMIETWNMGIMLLFTVMATAFMGYVLPWGQMSFWGATVITNLLSAIPYIGSTLVEWIWGGFSVDKATLTRFFAFHFILPFIITALVLVHLLFLHETGSNNPTGLNSDADKIPFHPYYTIKDFLGILILLMASMILTLFFPDILGDPDNFTPANPLNTPPHIKPEWYFLFAYAILRSIPNKLGGVLALILSILILAFMPLLHTSKQRALTFRPITQIMYWTLVADLLILTWIGGQPVEYPFITIGQTASIAYFAIILIFMPITGMIENNILDLD</sequence>
<dbReference type="EMBL" id="AF163903">
    <property type="protein sequence ID" value="AAF24195.1"/>
    <property type="molecule type" value="Genomic_DNA"/>
</dbReference>
<dbReference type="SMR" id="Q9T7L9"/>
<dbReference type="GO" id="GO:0005743">
    <property type="term" value="C:mitochondrial inner membrane"/>
    <property type="evidence" value="ECO:0007669"/>
    <property type="project" value="UniProtKB-SubCell"/>
</dbReference>
<dbReference type="GO" id="GO:0045275">
    <property type="term" value="C:respiratory chain complex III"/>
    <property type="evidence" value="ECO:0007669"/>
    <property type="project" value="InterPro"/>
</dbReference>
<dbReference type="GO" id="GO:0046872">
    <property type="term" value="F:metal ion binding"/>
    <property type="evidence" value="ECO:0007669"/>
    <property type="project" value="UniProtKB-KW"/>
</dbReference>
<dbReference type="GO" id="GO:0008121">
    <property type="term" value="F:ubiquinol-cytochrome-c reductase activity"/>
    <property type="evidence" value="ECO:0007669"/>
    <property type="project" value="InterPro"/>
</dbReference>
<dbReference type="GO" id="GO:0006122">
    <property type="term" value="P:mitochondrial electron transport, ubiquinol to cytochrome c"/>
    <property type="evidence" value="ECO:0007669"/>
    <property type="project" value="TreeGrafter"/>
</dbReference>
<dbReference type="CDD" id="cd00290">
    <property type="entry name" value="cytochrome_b_C"/>
    <property type="match status" value="1"/>
</dbReference>
<dbReference type="CDD" id="cd00284">
    <property type="entry name" value="Cytochrome_b_N"/>
    <property type="match status" value="1"/>
</dbReference>
<dbReference type="FunFam" id="1.20.810.10:FF:000002">
    <property type="entry name" value="Cytochrome b"/>
    <property type="match status" value="1"/>
</dbReference>
<dbReference type="Gene3D" id="1.20.810.10">
    <property type="entry name" value="Cytochrome Bc1 Complex, Chain C"/>
    <property type="match status" value="1"/>
</dbReference>
<dbReference type="InterPro" id="IPR005798">
    <property type="entry name" value="Cyt_b/b6_C"/>
</dbReference>
<dbReference type="InterPro" id="IPR036150">
    <property type="entry name" value="Cyt_b/b6_C_sf"/>
</dbReference>
<dbReference type="InterPro" id="IPR005797">
    <property type="entry name" value="Cyt_b/b6_N"/>
</dbReference>
<dbReference type="InterPro" id="IPR027387">
    <property type="entry name" value="Cytb/b6-like_sf"/>
</dbReference>
<dbReference type="InterPro" id="IPR030689">
    <property type="entry name" value="Cytochrome_b"/>
</dbReference>
<dbReference type="InterPro" id="IPR048260">
    <property type="entry name" value="Cytochrome_b_C_euk/bac"/>
</dbReference>
<dbReference type="InterPro" id="IPR048259">
    <property type="entry name" value="Cytochrome_b_N_euk/bac"/>
</dbReference>
<dbReference type="InterPro" id="IPR016174">
    <property type="entry name" value="Di-haem_cyt_TM"/>
</dbReference>
<dbReference type="PANTHER" id="PTHR19271">
    <property type="entry name" value="CYTOCHROME B"/>
    <property type="match status" value="1"/>
</dbReference>
<dbReference type="PANTHER" id="PTHR19271:SF16">
    <property type="entry name" value="CYTOCHROME B"/>
    <property type="match status" value="1"/>
</dbReference>
<dbReference type="Pfam" id="PF00032">
    <property type="entry name" value="Cytochrom_B_C"/>
    <property type="match status" value="1"/>
</dbReference>
<dbReference type="Pfam" id="PF00033">
    <property type="entry name" value="Cytochrome_B"/>
    <property type="match status" value="1"/>
</dbReference>
<dbReference type="PIRSF" id="PIRSF038885">
    <property type="entry name" value="COB"/>
    <property type="match status" value="1"/>
</dbReference>
<dbReference type="SUPFAM" id="SSF81648">
    <property type="entry name" value="a domain/subunit of cytochrome bc1 complex (Ubiquinol-cytochrome c reductase)"/>
    <property type="match status" value="1"/>
</dbReference>
<dbReference type="SUPFAM" id="SSF81342">
    <property type="entry name" value="Transmembrane di-heme cytochromes"/>
    <property type="match status" value="1"/>
</dbReference>
<dbReference type="PROSITE" id="PS51003">
    <property type="entry name" value="CYTB_CTER"/>
    <property type="match status" value="1"/>
</dbReference>
<dbReference type="PROSITE" id="PS51002">
    <property type="entry name" value="CYTB_NTER"/>
    <property type="match status" value="1"/>
</dbReference>
<protein>
    <recommendedName>
        <fullName>Cytochrome b</fullName>
    </recommendedName>
    <alternativeName>
        <fullName>Complex III subunit 3</fullName>
    </alternativeName>
    <alternativeName>
        <fullName>Complex III subunit III</fullName>
    </alternativeName>
    <alternativeName>
        <fullName>Cytochrome b-c1 complex subunit 3</fullName>
    </alternativeName>
    <alternativeName>
        <fullName>Ubiquinol-cytochrome-c reductase complex cytochrome b subunit</fullName>
    </alternativeName>
</protein>
<accession>Q9T7L9</accession>